<comment type="similarity">
    <text evidence="1">Belongs to the UPF0288 family.</text>
</comment>
<dbReference type="EMBL" id="AE000666">
    <property type="protein sequence ID" value="AAB86331.1"/>
    <property type="molecule type" value="Genomic_DNA"/>
</dbReference>
<dbReference type="PIR" id="E69116">
    <property type="entry name" value="E69116"/>
</dbReference>
<dbReference type="SMR" id="O27893"/>
<dbReference type="STRING" id="187420.MTH_1865"/>
<dbReference type="PaxDb" id="187420-MTH_1865"/>
<dbReference type="EnsemblBacteria" id="AAB86331">
    <property type="protein sequence ID" value="AAB86331"/>
    <property type="gene ID" value="MTH_1865"/>
</dbReference>
<dbReference type="KEGG" id="mth:MTH_1865"/>
<dbReference type="PATRIC" id="fig|187420.15.peg.1820"/>
<dbReference type="HOGENOM" id="CLU_533841_0_0_2"/>
<dbReference type="InParanoid" id="O27893"/>
<dbReference type="Proteomes" id="UP000005223">
    <property type="component" value="Chromosome"/>
</dbReference>
<dbReference type="HAMAP" id="MF_01089">
    <property type="entry name" value="UPF0288"/>
    <property type="match status" value="1"/>
</dbReference>
<dbReference type="InterPro" id="IPR016466">
    <property type="entry name" value="Methan_mark_3"/>
</dbReference>
<dbReference type="NCBIfam" id="TIGR03268">
    <property type="entry name" value="methan_mark_3"/>
    <property type="match status" value="1"/>
</dbReference>
<dbReference type="PIRSF" id="PIRSF005852">
    <property type="entry name" value="UCP005852"/>
    <property type="match status" value="1"/>
</dbReference>
<protein>
    <recommendedName>
        <fullName evidence="1">UPF0288 protein MTH_1865</fullName>
    </recommendedName>
</protein>
<feature type="chain" id="PRO_0000156054" description="UPF0288 protein MTH_1865">
    <location>
        <begin position="1"/>
        <end position="522"/>
    </location>
</feature>
<gene>
    <name type="ordered locus">MTH_1865</name>
</gene>
<sequence>MKKVYEGEIMFVKVNGEEVELPDGSTVRDALEATGAPYVEGTLVCLISGTRELERTIDTYRIRTTTGSILLELLPDDAPGIVEEWRRIYTELENMRIRWTTPSEIAMGPLRTELEPSRDEFTYDEDEVIMSLSGFSPDSTHIIISKEPHSAVYGVPRENRGVFARITGGKRTVERLTQDDVVKSVEPVVERKSIVESAAVTDLNTELEDGNQLFTYVKVKPSPESPQSVEHFFSMVEDGKLRVDYEANSFIGFYSLQGIKKDPEKIDKRNRGAVTLRNTGRGSGRVYIYREDRVSTPSHNLIGHVTEGMELVDIAGEGDQITVECEPGRIMTVAMTQKEAEDYLREYGIEQIREGIMDDDAIVVVQDPPYTMDILREGKVRTLGIDPDKILEIELDPAAPRSSWYFRRLTGLIDTPIGSLKVHFAFPGMKVVMFEGDKSLAKGLIPENTPERCVKKGNIGITNMSRRHIGMVGVRLEDNDEYGPTGEPFNGTNMIGKITGGIENVEKLKEGDTVYVRERKRG</sequence>
<proteinExistence type="inferred from homology"/>
<evidence type="ECO:0000255" key="1">
    <source>
        <dbReference type="HAMAP-Rule" id="MF_01089"/>
    </source>
</evidence>
<reference key="1">
    <citation type="journal article" date="1997" name="J. Bacteriol.">
        <title>Complete genome sequence of Methanobacterium thermoautotrophicum deltaH: functional analysis and comparative genomics.</title>
        <authorList>
            <person name="Smith D.R."/>
            <person name="Doucette-Stamm L.A."/>
            <person name="Deloughery C."/>
            <person name="Lee H.-M."/>
            <person name="Dubois J."/>
            <person name="Aldredge T."/>
            <person name="Bashirzadeh R."/>
            <person name="Blakely D."/>
            <person name="Cook R."/>
            <person name="Gilbert K."/>
            <person name="Harrison D."/>
            <person name="Hoang L."/>
            <person name="Keagle P."/>
            <person name="Lumm W."/>
            <person name="Pothier B."/>
            <person name="Qiu D."/>
            <person name="Spadafora R."/>
            <person name="Vicare R."/>
            <person name="Wang Y."/>
            <person name="Wierzbowski J."/>
            <person name="Gibson R."/>
            <person name="Jiwani N."/>
            <person name="Caruso A."/>
            <person name="Bush D."/>
            <person name="Safer H."/>
            <person name="Patwell D."/>
            <person name="Prabhakar S."/>
            <person name="McDougall S."/>
            <person name="Shimer G."/>
            <person name="Goyal A."/>
            <person name="Pietrovski S."/>
            <person name="Church G.M."/>
            <person name="Daniels C.J."/>
            <person name="Mao J.-I."/>
            <person name="Rice P."/>
            <person name="Noelling J."/>
            <person name="Reeve J.N."/>
        </authorList>
    </citation>
    <scope>NUCLEOTIDE SEQUENCE [LARGE SCALE GENOMIC DNA]</scope>
    <source>
        <strain>ATCC 29096 / DSM 1053 / JCM 10044 / NBRC 100330 / Delta H</strain>
    </source>
</reference>
<organism>
    <name type="scientific">Methanothermobacter thermautotrophicus (strain ATCC 29096 / DSM 1053 / JCM 10044 / NBRC 100330 / Delta H)</name>
    <name type="common">Methanobacterium thermoautotrophicum</name>
    <dbReference type="NCBI Taxonomy" id="187420"/>
    <lineage>
        <taxon>Archaea</taxon>
        <taxon>Methanobacteriati</taxon>
        <taxon>Methanobacteriota</taxon>
        <taxon>Methanomada group</taxon>
        <taxon>Methanobacteria</taxon>
        <taxon>Methanobacteriales</taxon>
        <taxon>Methanobacteriaceae</taxon>
        <taxon>Methanothermobacter</taxon>
    </lineage>
</organism>
<accession>O27893</accession>
<keyword id="KW-1185">Reference proteome</keyword>
<name>Y1865_METTH</name>